<accession>Q6UWM7</accession>
<accession>B3KQY0</accession>
<comment type="function">
    <text evidence="2">Plays a role in formation of the lens suture in the eye, which is important for normal optical properties of the lens.</text>
</comment>
<comment type="subunit">
    <text evidence="2">May form dimers.</text>
</comment>
<comment type="subcellular location">
    <subcellularLocation>
        <location evidence="1">Endoplasmic reticulum membrane</location>
        <topology evidence="1">Single-pass membrane protein</topology>
    </subcellularLocation>
</comment>
<comment type="alternative products">
    <event type="alternative splicing"/>
    <isoform>
        <id>Q6UWM7-1</id>
        <name>1</name>
        <sequence type="displayed"/>
    </isoform>
    <isoform>
        <id>Q6UWM7-2</id>
        <name>2</name>
        <sequence type="described" ref="VSP_054596"/>
    </isoform>
</comment>
<comment type="similarity">
    <text evidence="6">Belongs to the glycosyl hydrolase 1 family. Klotho subfamily.</text>
</comment>
<comment type="caution">
    <text evidence="6">Although it belongs to the glycosyl hydrolase 1 family, Asp-201 is present instead of the conserved Glu which is an active site residue. It is therefore expected that this protein lacks glycosidase activity.</text>
</comment>
<sequence length="567" mass="65088">MKPVWVATLLWMLLLVPRLGAARKGSPEEASFYYGTFPLGFSWGVGSSAYQTEGAWDQDGKGPSIWDVFTHSGKGKVLGNETADVACDGYYKVQEDIILLRELHVNHYRFSLSWPRLLPTGIRAEQVNKKGIEFYSDLIDALLSSNITPIVTLHHWDLPQLLQVKYGGWQNVSMANYFRDYANLCFEAFGDRVKHWITFSDPRAMAEKGYETGHHAPGLKLRGTGLYKAAHHIIKAHAKAWHSYNTTWRSKQQGLVGISLNCDWGEPVDISNPKDLEAAERYLQFCLGWFANPIYAGDYPQVMKDYIGRKSAEQGLEMSRLPVFSLQEKSYIKGTSDFLGLGHFTTRYITERNYPSRQGPSYQNDRDLIELVDPNWPDLGSKWLYSVPWGFRRLLNFAQTQYGDPPIYVMENGASQKFHCTQLCDEWRIQYLKGYINEMLKAIKDGANIKGYTSWSLLDKFEWEKGYSDRYGFYYVEFNDRNKPRYPKASVQYYKKIIIANGFPNPREVESWYLKALETCSINNQMLAAEPLLSHMQMVTEIVVPTVCSLCVLITAVLLMLLLRRQS</sequence>
<dbReference type="EMBL" id="AY358729">
    <property type="protein sequence ID" value="AAQ89091.1"/>
    <property type="molecule type" value="mRNA"/>
</dbReference>
<dbReference type="EMBL" id="AK090598">
    <property type="protein sequence ID" value="BAG52192.1"/>
    <property type="molecule type" value="mRNA"/>
</dbReference>
<dbReference type="EMBL" id="AC116913">
    <property type="status" value="NOT_ANNOTATED_CDS"/>
    <property type="molecule type" value="Genomic_DNA"/>
</dbReference>
<dbReference type="CCDS" id="CCDS10220.1">
    <molecule id="Q6UWM7-1"/>
</dbReference>
<dbReference type="CCDS" id="CCDS61678.1">
    <molecule id="Q6UWM7-2"/>
</dbReference>
<dbReference type="RefSeq" id="NP_001265491.1">
    <molecule id="Q6UWM7-2"/>
    <property type="nucleotide sequence ID" value="NM_001278562.3"/>
</dbReference>
<dbReference type="RefSeq" id="NP_997221.2">
    <molecule id="Q6UWM7-1"/>
    <property type="nucleotide sequence ID" value="NM_207338.4"/>
</dbReference>
<dbReference type="SMR" id="Q6UWM7"/>
<dbReference type="BioGRID" id="128236">
    <property type="interactions" value="30"/>
</dbReference>
<dbReference type="FunCoup" id="Q6UWM7">
    <property type="interactions" value="14"/>
</dbReference>
<dbReference type="IntAct" id="Q6UWM7">
    <property type="interactions" value="24"/>
</dbReference>
<dbReference type="STRING" id="9606.ENSP00000343490"/>
<dbReference type="DrugBank" id="DB03430">
    <property type="generic name" value="(S)-4-hydroxymandelonitrile"/>
</dbReference>
<dbReference type="DrugBank" id="DB02185">
    <property type="generic name" value="2,4-Dihydroxy-7-(Methyloxy)-2h-1,4-Benzoxazin-3(4h)-One"/>
</dbReference>
<dbReference type="DrugBank" id="DB02379">
    <property type="generic name" value="Beta-D-Glucose"/>
</dbReference>
<dbReference type="DrugBank" id="DB02471">
    <property type="generic name" value="Nojirimycine Tetrazole"/>
</dbReference>
<dbReference type="DrugBank" id="DB08430">
    <property type="generic name" value="PARA-NITROPHENYL 1-THIO-BETA-D-GLUCOPYRANOSIDE"/>
</dbReference>
<dbReference type="CAZy" id="GH1">
    <property type="family name" value="Glycoside Hydrolase Family 1"/>
</dbReference>
<dbReference type="GlyCosmos" id="Q6UWM7">
    <property type="glycosylation" value="3 sites, No reported glycans"/>
</dbReference>
<dbReference type="GlyGen" id="Q6UWM7">
    <property type="glycosylation" value="3 sites"/>
</dbReference>
<dbReference type="iPTMnet" id="Q6UWM7"/>
<dbReference type="PhosphoSitePlus" id="Q6UWM7"/>
<dbReference type="BioMuta" id="LCTL"/>
<dbReference type="DMDM" id="77416521"/>
<dbReference type="jPOST" id="Q6UWM7"/>
<dbReference type="MassIVE" id="Q6UWM7"/>
<dbReference type="PaxDb" id="9606-ENSP00000343490"/>
<dbReference type="PeptideAtlas" id="Q6UWM7"/>
<dbReference type="Antibodypedia" id="26209">
    <property type="antibodies" value="43 antibodies from 18 providers"/>
</dbReference>
<dbReference type="DNASU" id="197021"/>
<dbReference type="Ensembl" id="ENST00000341509.9">
    <molecule id="Q6UWM7-1"/>
    <property type="protein sequence ID" value="ENSP00000343490.5"/>
    <property type="gene ID" value="ENSG00000188501.12"/>
</dbReference>
<dbReference type="Ensembl" id="ENST00000537670.5">
    <molecule id="Q6UWM7-2"/>
    <property type="protein sequence ID" value="ENSP00000445419.1"/>
    <property type="gene ID" value="ENSG00000188501.12"/>
</dbReference>
<dbReference type="Ensembl" id="ENST00000695545.1">
    <molecule id="Q6UWM7-1"/>
    <property type="protein sequence ID" value="ENSP00000512002.1"/>
    <property type="gene ID" value="ENSG00000188501.12"/>
</dbReference>
<dbReference type="GeneID" id="197021"/>
<dbReference type="KEGG" id="hsa:197021"/>
<dbReference type="MANE-Select" id="ENST00000695545.1">
    <property type="protein sequence ID" value="ENSP00000512002.1"/>
    <property type="RefSeq nucleotide sequence ID" value="NM_207338.4"/>
    <property type="RefSeq protein sequence ID" value="NP_997221.2"/>
</dbReference>
<dbReference type="UCSC" id="uc002aqc.5">
    <molecule id="Q6UWM7-1"/>
    <property type="organism name" value="human"/>
</dbReference>
<dbReference type="AGR" id="HGNC:15583"/>
<dbReference type="CTD" id="197021"/>
<dbReference type="DisGeNET" id="197021"/>
<dbReference type="GeneCards" id="LCTL"/>
<dbReference type="HGNC" id="HGNC:15583">
    <property type="gene designation" value="LCTL"/>
</dbReference>
<dbReference type="HPA" id="ENSG00000188501">
    <property type="expression patterns" value="Tissue enriched (brain)"/>
</dbReference>
<dbReference type="neXtProt" id="NX_Q6UWM7"/>
<dbReference type="OpenTargets" id="ENSG00000188501"/>
<dbReference type="PharmGKB" id="PA142671560"/>
<dbReference type="VEuPathDB" id="HostDB:ENSG00000188501"/>
<dbReference type="eggNOG" id="KOG0626">
    <property type="taxonomic scope" value="Eukaryota"/>
</dbReference>
<dbReference type="GeneTree" id="ENSGT00940000157369"/>
<dbReference type="HOGENOM" id="CLU_001859_1_3_1"/>
<dbReference type="InParanoid" id="Q6UWM7"/>
<dbReference type="OMA" id="HGSNDFY"/>
<dbReference type="OrthoDB" id="65569at2759"/>
<dbReference type="PAN-GO" id="Q6UWM7">
    <property type="GO annotations" value="0 GO annotations based on evolutionary models"/>
</dbReference>
<dbReference type="PhylomeDB" id="Q6UWM7"/>
<dbReference type="TreeFam" id="TF314803"/>
<dbReference type="PathwayCommons" id="Q6UWM7"/>
<dbReference type="BioGRID-ORCS" id="197021">
    <property type="hits" value="11 hits in 1151 CRISPR screens"/>
</dbReference>
<dbReference type="GenomeRNAi" id="197021"/>
<dbReference type="Pharos" id="Q6UWM7">
    <property type="development level" value="Tdark"/>
</dbReference>
<dbReference type="PRO" id="PR:Q6UWM7"/>
<dbReference type="Proteomes" id="UP000005640">
    <property type="component" value="Chromosome 15"/>
</dbReference>
<dbReference type="RNAct" id="Q6UWM7">
    <property type="molecule type" value="protein"/>
</dbReference>
<dbReference type="Bgee" id="ENSG00000188501">
    <property type="expression patterns" value="Expressed in sural nerve and 93 other cell types or tissues"/>
</dbReference>
<dbReference type="ExpressionAtlas" id="Q6UWM7">
    <property type="expression patterns" value="baseline and differential"/>
</dbReference>
<dbReference type="GO" id="GO:0005903">
    <property type="term" value="C:brush border"/>
    <property type="evidence" value="ECO:0007669"/>
    <property type="project" value="Ensembl"/>
</dbReference>
<dbReference type="GO" id="GO:0005789">
    <property type="term" value="C:endoplasmic reticulum membrane"/>
    <property type="evidence" value="ECO:0007669"/>
    <property type="project" value="UniProtKB-SubCell"/>
</dbReference>
<dbReference type="GO" id="GO:0004553">
    <property type="term" value="F:hydrolase activity, hydrolyzing O-glycosyl compounds"/>
    <property type="evidence" value="ECO:0007669"/>
    <property type="project" value="InterPro"/>
</dbReference>
<dbReference type="GO" id="GO:0005975">
    <property type="term" value="P:carbohydrate metabolic process"/>
    <property type="evidence" value="ECO:0007669"/>
    <property type="project" value="InterPro"/>
</dbReference>
<dbReference type="GO" id="GO:0002089">
    <property type="term" value="P:lens morphogenesis in camera-type eye"/>
    <property type="evidence" value="ECO:0007669"/>
    <property type="project" value="Ensembl"/>
</dbReference>
<dbReference type="GO" id="GO:0007601">
    <property type="term" value="P:visual perception"/>
    <property type="evidence" value="ECO:0007669"/>
    <property type="project" value="UniProtKB-KW"/>
</dbReference>
<dbReference type="FunFam" id="3.20.20.80:FF:000399">
    <property type="entry name" value="Lactase-like protein"/>
    <property type="match status" value="1"/>
</dbReference>
<dbReference type="Gene3D" id="3.20.20.80">
    <property type="entry name" value="Glycosidases"/>
    <property type="match status" value="1"/>
</dbReference>
<dbReference type="InterPro" id="IPR001360">
    <property type="entry name" value="Glyco_hydro_1"/>
</dbReference>
<dbReference type="InterPro" id="IPR018120">
    <property type="entry name" value="Glyco_hydro_1_AS"/>
</dbReference>
<dbReference type="InterPro" id="IPR033132">
    <property type="entry name" value="Glyco_hydro_1_N_CS"/>
</dbReference>
<dbReference type="InterPro" id="IPR017853">
    <property type="entry name" value="Glycoside_hydrolase_SF"/>
</dbReference>
<dbReference type="PANTHER" id="PTHR10353">
    <property type="entry name" value="GLYCOSYL HYDROLASE"/>
    <property type="match status" value="1"/>
</dbReference>
<dbReference type="PANTHER" id="PTHR10353:SF336">
    <property type="entry name" value="LACTASE-LIKE PROTEIN"/>
    <property type="match status" value="1"/>
</dbReference>
<dbReference type="Pfam" id="PF00232">
    <property type="entry name" value="Glyco_hydro_1"/>
    <property type="match status" value="1"/>
</dbReference>
<dbReference type="PRINTS" id="PR00131">
    <property type="entry name" value="GLHYDRLASE1"/>
</dbReference>
<dbReference type="SUPFAM" id="SSF51445">
    <property type="entry name" value="(Trans)glycosidases"/>
    <property type="match status" value="1"/>
</dbReference>
<dbReference type="PROSITE" id="PS00572">
    <property type="entry name" value="GLYCOSYL_HYDROL_F1_1"/>
    <property type="match status" value="1"/>
</dbReference>
<dbReference type="PROSITE" id="PS00653">
    <property type="entry name" value="GLYCOSYL_HYDROL_F1_2"/>
    <property type="match status" value="1"/>
</dbReference>
<reference key="1">
    <citation type="journal article" date="2003" name="Genome Res.">
        <title>The secreted protein discovery initiative (SPDI), a large-scale effort to identify novel human secreted and transmembrane proteins: a bioinformatics assessment.</title>
        <authorList>
            <person name="Clark H.F."/>
            <person name="Gurney A.L."/>
            <person name="Abaya E."/>
            <person name="Baker K."/>
            <person name="Baldwin D.T."/>
            <person name="Brush J."/>
            <person name="Chen J."/>
            <person name="Chow B."/>
            <person name="Chui C."/>
            <person name="Crowley C."/>
            <person name="Currell B."/>
            <person name="Deuel B."/>
            <person name="Dowd P."/>
            <person name="Eaton D."/>
            <person name="Foster J.S."/>
            <person name="Grimaldi C."/>
            <person name="Gu Q."/>
            <person name="Hass P.E."/>
            <person name="Heldens S."/>
            <person name="Huang A."/>
            <person name="Kim H.S."/>
            <person name="Klimowski L."/>
            <person name="Jin Y."/>
            <person name="Johnson S."/>
            <person name="Lee J."/>
            <person name="Lewis L."/>
            <person name="Liao D."/>
            <person name="Mark M.R."/>
            <person name="Robbie E."/>
            <person name="Sanchez C."/>
            <person name="Schoenfeld J."/>
            <person name="Seshagiri S."/>
            <person name="Simmons L."/>
            <person name="Singh J."/>
            <person name="Smith V."/>
            <person name="Stinson J."/>
            <person name="Vagts A."/>
            <person name="Vandlen R.L."/>
            <person name="Watanabe C."/>
            <person name="Wieand D."/>
            <person name="Woods K."/>
            <person name="Xie M.-H."/>
            <person name="Yansura D.G."/>
            <person name="Yi S."/>
            <person name="Yu G."/>
            <person name="Yuan J."/>
            <person name="Zhang M."/>
            <person name="Zhang Z."/>
            <person name="Goddard A.D."/>
            <person name="Wood W.I."/>
            <person name="Godowski P.J."/>
            <person name="Gray A.M."/>
        </authorList>
    </citation>
    <scope>NUCLEOTIDE SEQUENCE [LARGE SCALE MRNA] (ISOFORM 1)</scope>
</reference>
<reference key="2">
    <citation type="journal article" date="2004" name="Nat. Genet.">
        <title>Complete sequencing and characterization of 21,243 full-length human cDNAs.</title>
        <authorList>
            <person name="Ota T."/>
            <person name="Suzuki Y."/>
            <person name="Nishikawa T."/>
            <person name="Otsuki T."/>
            <person name="Sugiyama T."/>
            <person name="Irie R."/>
            <person name="Wakamatsu A."/>
            <person name="Hayashi K."/>
            <person name="Sato H."/>
            <person name="Nagai K."/>
            <person name="Kimura K."/>
            <person name="Makita H."/>
            <person name="Sekine M."/>
            <person name="Obayashi M."/>
            <person name="Nishi T."/>
            <person name="Shibahara T."/>
            <person name="Tanaka T."/>
            <person name="Ishii S."/>
            <person name="Yamamoto J."/>
            <person name="Saito K."/>
            <person name="Kawai Y."/>
            <person name="Isono Y."/>
            <person name="Nakamura Y."/>
            <person name="Nagahari K."/>
            <person name="Murakami K."/>
            <person name="Yasuda T."/>
            <person name="Iwayanagi T."/>
            <person name="Wagatsuma M."/>
            <person name="Shiratori A."/>
            <person name="Sudo H."/>
            <person name="Hosoiri T."/>
            <person name="Kaku Y."/>
            <person name="Kodaira H."/>
            <person name="Kondo H."/>
            <person name="Sugawara M."/>
            <person name="Takahashi M."/>
            <person name="Kanda K."/>
            <person name="Yokoi T."/>
            <person name="Furuya T."/>
            <person name="Kikkawa E."/>
            <person name="Omura Y."/>
            <person name="Abe K."/>
            <person name="Kamihara K."/>
            <person name="Katsuta N."/>
            <person name="Sato K."/>
            <person name="Tanikawa M."/>
            <person name="Yamazaki M."/>
            <person name="Ninomiya K."/>
            <person name="Ishibashi T."/>
            <person name="Yamashita H."/>
            <person name="Murakawa K."/>
            <person name="Fujimori K."/>
            <person name="Tanai H."/>
            <person name="Kimata M."/>
            <person name="Watanabe M."/>
            <person name="Hiraoka S."/>
            <person name="Chiba Y."/>
            <person name="Ishida S."/>
            <person name="Ono Y."/>
            <person name="Takiguchi S."/>
            <person name="Watanabe S."/>
            <person name="Yosida M."/>
            <person name="Hotuta T."/>
            <person name="Kusano J."/>
            <person name="Kanehori K."/>
            <person name="Takahashi-Fujii A."/>
            <person name="Hara H."/>
            <person name="Tanase T.-O."/>
            <person name="Nomura Y."/>
            <person name="Togiya S."/>
            <person name="Komai F."/>
            <person name="Hara R."/>
            <person name="Takeuchi K."/>
            <person name="Arita M."/>
            <person name="Imose N."/>
            <person name="Musashino K."/>
            <person name="Yuuki H."/>
            <person name="Oshima A."/>
            <person name="Sasaki N."/>
            <person name="Aotsuka S."/>
            <person name="Yoshikawa Y."/>
            <person name="Matsunawa H."/>
            <person name="Ichihara T."/>
            <person name="Shiohata N."/>
            <person name="Sano S."/>
            <person name="Moriya S."/>
            <person name="Momiyama H."/>
            <person name="Satoh N."/>
            <person name="Takami S."/>
            <person name="Terashima Y."/>
            <person name="Suzuki O."/>
            <person name="Nakagawa S."/>
            <person name="Senoh A."/>
            <person name="Mizoguchi H."/>
            <person name="Goto Y."/>
            <person name="Shimizu F."/>
            <person name="Wakebe H."/>
            <person name="Hishigaki H."/>
            <person name="Watanabe T."/>
            <person name="Sugiyama A."/>
            <person name="Takemoto M."/>
            <person name="Kawakami B."/>
            <person name="Yamazaki M."/>
            <person name="Watanabe K."/>
            <person name="Kumagai A."/>
            <person name="Itakura S."/>
            <person name="Fukuzumi Y."/>
            <person name="Fujimori Y."/>
            <person name="Komiyama M."/>
            <person name="Tashiro H."/>
            <person name="Tanigami A."/>
            <person name="Fujiwara T."/>
            <person name="Ono T."/>
            <person name="Yamada K."/>
            <person name="Fujii Y."/>
            <person name="Ozaki K."/>
            <person name="Hirao M."/>
            <person name="Ohmori Y."/>
            <person name="Kawabata A."/>
            <person name="Hikiji T."/>
            <person name="Kobatake N."/>
            <person name="Inagaki H."/>
            <person name="Ikema Y."/>
            <person name="Okamoto S."/>
            <person name="Okitani R."/>
            <person name="Kawakami T."/>
            <person name="Noguchi S."/>
            <person name="Itoh T."/>
            <person name="Shigeta K."/>
            <person name="Senba T."/>
            <person name="Matsumura K."/>
            <person name="Nakajima Y."/>
            <person name="Mizuno T."/>
            <person name="Morinaga M."/>
            <person name="Sasaki M."/>
            <person name="Togashi T."/>
            <person name="Oyama M."/>
            <person name="Hata H."/>
            <person name="Watanabe M."/>
            <person name="Komatsu T."/>
            <person name="Mizushima-Sugano J."/>
            <person name="Satoh T."/>
            <person name="Shirai Y."/>
            <person name="Takahashi Y."/>
            <person name="Nakagawa K."/>
            <person name="Okumura K."/>
            <person name="Nagase T."/>
            <person name="Nomura N."/>
            <person name="Kikuchi H."/>
            <person name="Masuho Y."/>
            <person name="Yamashita R."/>
            <person name="Nakai K."/>
            <person name="Yada T."/>
            <person name="Nakamura Y."/>
            <person name="Ohara O."/>
            <person name="Isogai T."/>
            <person name="Sugano S."/>
        </authorList>
    </citation>
    <scope>NUCLEOTIDE SEQUENCE [LARGE SCALE MRNA] (ISOFORM 2)</scope>
</reference>
<reference key="3">
    <citation type="journal article" date="2006" name="Nature">
        <title>Analysis of the DNA sequence and duplication history of human chromosome 15.</title>
        <authorList>
            <person name="Zody M.C."/>
            <person name="Garber M."/>
            <person name="Sharpe T."/>
            <person name="Young S.K."/>
            <person name="Rowen L."/>
            <person name="O'Neill K."/>
            <person name="Whittaker C.A."/>
            <person name="Kamal M."/>
            <person name="Chang J.L."/>
            <person name="Cuomo C.A."/>
            <person name="Dewar K."/>
            <person name="FitzGerald M.G."/>
            <person name="Kodira C.D."/>
            <person name="Madan A."/>
            <person name="Qin S."/>
            <person name="Yang X."/>
            <person name="Abbasi N."/>
            <person name="Abouelleil A."/>
            <person name="Arachchi H.M."/>
            <person name="Baradarani L."/>
            <person name="Birditt B."/>
            <person name="Bloom S."/>
            <person name="Bloom T."/>
            <person name="Borowsky M.L."/>
            <person name="Burke J."/>
            <person name="Butler J."/>
            <person name="Cook A."/>
            <person name="DeArellano K."/>
            <person name="DeCaprio D."/>
            <person name="Dorris L. III"/>
            <person name="Dors M."/>
            <person name="Eichler E.E."/>
            <person name="Engels R."/>
            <person name="Fahey J."/>
            <person name="Fleetwood P."/>
            <person name="Friedman C."/>
            <person name="Gearin G."/>
            <person name="Hall J.L."/>
            <person name="Hensley G."/>
            <person name="Johnson E."/>
            <person name="Jones C."/>
            <person name="Kamat A."/>
            <person name="Kaur A."/>
            <person name="Locke D.P."/>
            <person name="Madan A."/>
            <person name="Munson G."/>
            <person name="Jaffe D.B."/>
            <person name="Lui A."/>
            <person name="Macdonald P."/>
            <person name="Mauceli E."/>
            <person name="Naylor J.W."/>
            <person name="Nesbitt R."/>
            <person name="Nicol R."/>
            <person name="O'Leary S.B."/>
            <person name="Ratcliffe A."/>
            <person name="Rounsley S."/>
            <person name="She X."/>
            <person name="Sneddon K.M.B."/>
            <person name="Stewart S."/>
            <person name="Sougnez C."/>
            <person name="Stone S.M."/>
            <person name="Topham K."/>
            <person name="Vincent D."/>
            <person name="Wang S."/>
            <person name="Zimmer A.R."/>
            <person name="Birren B.W."/>
            <person name="Hood L."/>
            <person name="Lander E.S."/>
            <person name="Nusbaum C."/>
        </authorList>
    </citation>
    <scope>NUCLEOTIDE SEQUENCE [LARGE SCALE GENOMIC DNA]</scope>
</reference>
<reference key="4">
    <citation type="journal article" date="2004" name="Protein Sci.">
        <title>Signal peptide prediction based on analysis of experimentally verified cleavage sites.</title>
        <authorList>
            <person name="Zhang Z."/>
            <person name="Henzel W.J."/>
        </authorList>
    </citation>
    <scope>PROTEIN SEQUENCE OF 22-36</scope>
</reference>
<feature type="signal peptide" evidence="4">
    <location>
        <begin position="1"/>
        <end position="21"/>
    </location>
</feature>
<feature type="chain" id="PRO_0000042251" description="Lactase-like protein">
    <location>
        <begin position="22"/>
        <end position="567"/>
    </location>
</feature>
<feature type="topological domain" description="Extracellular" evidence="3">
    <location>
        <begin position="23"/>
        <end position="541"/>
    </location>
</feature>
<feature type="transmembrane region" description="Helical" evidence="3">
    <location>
        <begin position="542"/>
        <end position="562"/>
    </location>
</feature>
<feature type="topological domain" description="Cytoplasmic" evidence="3">
    <location>
        <begin position="563"/>
        <end position="567"/>
    </location>
</feature>
<feature type="glycosylation site" description="N-linked (GlcNAc...) asparagine" evidence="3">
    <location>
        <position position="80"/>
    </location>
</feature>
<feature type="glycosylation site" description="N-linked (GlcNAc...) asparagine" evidence="3">
    <location>
        <position position="171"/>
    </location>
</feature>
<feature type="glycosylation site" description="N-linked (GlcNAc...) asparagine" evidence="3">
    <location>
        <position position="245"/>
    </location>
</feature>
<feature type="splice variant" id="VSP_054596" description="In isoform 2." evidence="5">
    <location>
        <begin position="1"/>
        <end position="173"/>
    </location>
</feature>
<feature type="sequence variant" id="VAR_049297" description="In dbSNP:rs7179073.">
    <original>T</original>
    <variation>M</variation>
    <location>
        <position position="212"/>
    </location>
</feature>
<feature type="sequence variant" id="VAR_023586" description="In dbSNP:rs1030986.">
    <original>A</original>
    <variation>T</variation>
    <location>
        <position position="240"/>
    </location>
</feature>
<organism>
    <name type="scientific">Homo sapiens</name>
    <name type="common">Human</name>
    <dbReference type="NCBI Taxonomy" id="9606"/>
    <lineage>
        <taxon>Eukaryota</taxon>
        <taxon>Metazoa</taxon>
        <taxon>Chordata</taxon>
        <taxon>Craniata</taxon>
        <taxon>Vertebrata</taxon>
        <taxon>Euteleostomi</taxon>
        <taxon>Mammalia</taxon>
        <taxon>Eutheria</taxon>
        <taxon>Euarchontoglires</taxon>
        <taxon>Primates</taxon>
        <taxon>Haplorrhini</taxon>
        <taxon>Catarrhini</taxon>
        <taxon>Hominidae</taxon>
        <taxon>Homo</taxon>
    </lineage>
</organism>
<evidence type="ECO:0000250" key="1"/>
<evidence type="ECO:0000250" key="2">
    <source>
        <dbReference type="UniProtKB" id="Q8K1F9"/>
    </source>
</evidence>
<evidence type="ECO:0000255" key="3"/>
<evidence type="ECO:0000269" key="4">
    <source>
    </source>
</evidence>
<evidence type="ECO:0000303" key="5">
    <source>
    </source>
</evidence>
<evidence type="ECO:0000305" key="6"/>
<keyword id="KW-0025">Alternative splicing</keyword>
<keyword id="KW-0903">Direct protein sequencing</keyword>
<keyword id="KW-0256">Endoplasmic reticulum</keyword>
<keyword id="KW-0325">Glycoprotein</keyword>
<keyword id="KW-0472">Membrane</keyword>
<keyword id="KW-1267">Proteomics identification</keyword>
<keyword id="KW-1185">Reference proteome</keyword>
<keyword id="KW-0716">Sensory transduction</keyword>
<keyword id="KW-0732">Signal</keyword>
<keyword id="KW-0812">Transmembrane</keyword>
<keyword id="KW-1133">Transmembrane helix</keyword>
<keyword id="KW-0844">Vision</keyword>
<proteinExistence type="evidence at protein level"/>
<name>LCTL_HUMAN</name>
<gene>
    <name type="primary">LCTL</name>
    <name type="synonym">KLPH</name>
    <name type="ORF">UNQ3022/PRO9820</name>
</gene>
<protein>
    <recommendedName>
        <fullName>Lactase-like protein</fullName>
    </recommendedName>
    <alternativeName>
        <fullName>Klotho/lactase-phlorizin hydrolase-related protein</fullName>
    </alternativeName>
</protein>